<protein>
    <recommendedName>
        <fullName evidence="1">Translation initiation factor IF-3</fullName>
    </recommendedName>
</protein>
<reference key="1">
    <citation type="journal article" date="2003" name="Science">
        <title>Genome of Geobacter sulfurreducens: metal reduction in subsurface environments.</title>
        <authorList>
            <person name="Methe B.A."/>
            <person name="Nelson K.E."/>
            <person name="Eisen J.A."/>
            <person name="Paulsen I.T."/>
            <person name="Nelson W.C."/>
            <person name="Heidelberg J.F."/>
            <person name="Wu D."/>
            <person name="Wu M."/>
            <person name="Ward N.L."/>
            <person name="Beanan M.J."/>
            <person name="Dodson R.J."/>
            <person name="Madupu R."/>
            <person name="Brinkac L.M."/>
            <person name="Daugherty S.C."/>
            <person name="DeBoy R.T."/>
            <person name="Durkin A.S."/>
            <person name="Gwinn M.L."/>
            <person name="Kolonay J.F."/>
            <person name="Sullivan S.A."/>
            <person name="Haft D.H."/>
            <person name="Selengut J."/>
            <person name="Davidsen T.M."/>
            <person name="Zafar N."/>
            <person name="White O."/>
            <person name="Tran B."/>
            <person name="Romero C."/>
            <person name="Forberger H.A."/>
            <person name="Weidman J.F."/>
            <person name="Khouri H.M."/>
            <person name="Feldblyum T.V."/>
            <person name="Utterback T.R."/>
            <person name="Van Aken S.E."/>
            <person name="Lovley D.R."/>
            <person name="Fraser C.M."/>
        </authorList>
    </citation>
    <scope>NUCLEOTIDE SEQUENCE [LARGE SCALE GENOMIC DNA]</scope>
    <source>
        <strain>ATCC 51573 / DSM 12127 / PCA</strain>
    </source>
</reference>
<evidence type="ECO:0000255" key="1">
    <source>
        <dbReference type="HAMAP-Rule" id="MF_00080"/>
    </source>
</evidence>
<dbReference type="EMBL" id="AE017180">
    <property type="protein sequence ID" value="AAR34890.1"/>
    <property type="molecule type" value="Genomic_DNA"/>
</dbReference>
<dbReference type="RefSeq" id="NP_952567.1">
    <property type="nucleotide sequence ID" value="NC_002939.5"/>
</dbReference>
<dbReference type="RefSeq" id="WP_010942163.1">
    <property type="nucleotide sequence ID" value="NC_002939.5"/>
</dbReference>
<dbReference type="SMR" id="Q74D03"/>
<dbReference type="FunCoup" id="Q74D03">
    <property type="interactions" value="585"/>
</dbReference>
<dbReference type="STRING" id="243231.GSU1516"/>
<dbReference type="EnsemblBacteria" id="AAR34890">
    <property type="protein sequence ID" value="AAR34890"/>
    <property type="gene ID" value="GSU1516"/>
</dbReference>
<dbReference type="KEGG" id="gsu:GSU1516"/>
<dbReference type="PATRIC" id="fig|243231.5.peg.1558"/>
<dbReference type="eggNOG" id="COG0290">
    <property type="taxonomic scope" value="Bacteria"/>
</dbReference>
<dbReference type="HOGENOM" id="CLU_054919_3_2_7"/>
<dbReference type="InParanoid" id="Q74D03"/>
<dbReference type="OrthoDB" id="9806014at2"/>
<dbReference type="Proteomes" id="UP000000577">
    <property type="component" value="Chromosome"/>
</dbReference>
<dbReference type="GO" id="GO:0005829">
    <property type="term" value="C:cytosol"/>
    <property type="evidence" value="ECO:0000318"/>
    <property type="project" value="GO_Central"/>
</dbReference>
<dbReference type="GO" id="GO:0043022">
    <property type="term" value="F:ribosome binding"/>
    <property type="evidence" value="ECO:0000318"/>
    <property type="project" value="GO_Central"/>
</dbReference>
<dbReference type="GO" id="GO:0003743">
    <property type="term" value="F:translation initiation factor activity"/>
    <property type="evidence" value="ECO:0000318"/>
    <property type="project" value="GO_Central"/>
</dbReference>
<dbReference type="GO" id="GO:0032790">
    <property type="term" value="P:ribosome disassembly"/>
    <property type="evidence" value="ECO:0000318"/>
    <property type="project" value="GO_Central"/>
</dbReference>
<dbReference type="FunFam" id="3.10.20.80:FF:000001">
    <property type="entry name" value="Translation initiation factor IF-3"/>
    <property type="match status" value="1"/>
</dbReference>
<dbReference type="FunFam" id="3.30.110.10:FF:000001">
    <property type="entry name" value="Translation initiation factor IF-3"/>
    <property type="match status" value="1"/>
</dbReference>
<dbReference type="Gene3D" id="3.30.110.10">
    <property type="entry name" value="Translation initiation factor 3 (IF-3), C-terminal domain"/>
    <property type="match status" value="1"/>
</dbReference>
<dbReference type="Gene3D" id="3.10.20.80">
    <property type="entry name" value="Translation initiation factor 3 (IF-3), N-terminal domain"/>
    <property type="match status" value="1"/>
</dbReference>
<dbReference type="HAMAP" id="MF_00080">
    <property type="entry name" value="IF_3"/>
    <property type="match status" value="1"/>
</dbReference>
<dbReference type="InterPro" id="IPR036788">
    <property type="entry name" value="T_IF-3_C_sf"/>
</dbReference>
<dbReference type="InterPro" id="IPR036787">
    <property type="entry name" value="T_IF-3_N_sf"/>
</dbReference>
<dbReference type="InterPro" id="IPR019813">
    <property type="entry name" value="Translation_initiation_fac3_CS"/>
</dbReference>
<dbReference type="InterPro" id="IPR001288">
    <property type="entry name" value="Translation_initiation_fac_3"/>
</dbReference>
<dbReference type="InterPro" id="IPR019815">
    <property type="entry name" value="Translation_initiation_fac_3_C"/>
</dbReference>
<dbReference type="InterPro" id="IPR019814">
    <property type="entry name" value="Translation_initiation_fac_3_N"/>
</dbReference>
<dbReference type="NCBIfam" id="TIGR00168">
    <property type="entry name" value="infC"/>
    <property type="match status" value="1"/>
</dbReference>
<dbReference type="PANTHER" id="PTHR10938">
    <property type="entry name" value="TRANSLATION INITIATION FACTOR IF-3"/>
    <property type="match status" value="1"/>
</dbReference>
<dbReference type="PANTHER" id="PTHR10938:SF0">
    <property type="entry name" value="TRANSLATION INITIATION FACTOR IF-3, MITOCHONDRIAL"/>
    <property type="match status" value="1"/>
</dbReference>
<dbReference type="Pfam" id="PF00707">
    <property type="entry name" value="IF3_C"/>
    <property type="match status" value="1"/>
</dbReference>
<dbReference type="Pfam" id="PF05198">
    <property type="entry name" value="IF3_N"/>
    <property type="match status" value="1"/>
</dbReference>
<dbReference type="SUPFAM" id="SSF55200">
    <property type="entry name" value="Translation initiation factor IF3, C-terminal domain"/>
    <property type="match status" value="1"/>
</dbReference>
<dbReference type="SUPFAM" id="SSF54364">
    <property type="entry name" value="Translation initiation factor IF3, N-terminal domain"/>
    <property type="match status" value="1"/>
</dbReference>
<dbReference type="PROSITE" id="PS00938">
    <property type="entry name" value="IF3"/>
    <property type="match status" value="1"/>
</dbReference>
<organism>
    <name type="scientific">Geobacter sulfurreducens (strain ATCC 51573 / DSM 12127 / PCA)</name>
    <dbReference type="NCBI Taxonomy" id="243231"/>
    <lineage>
        <taxon>Bacteria</taxon>
        <taxon>Pseudomonadati</taxon>
        <taxon>Thermodesulfobacteriota</taxon>
        <taxon>Desulfuromonadia</taxon>
        <taxon>Geobacterales</taxon>
        <taxon>Geobacteraceae</taxon>
        <taxon>Geobacter</taxon>
    </lineage>
</organism>
<accession>Q74D03</accession>
<gene>
    <name evidence="1" type="primary">infC</name>
    <name type="ordered locus">GSU1516</name>
</gene>
<comment type="function">
    <text evidence="1">IF-3 binds to the 30S ribosomal subunit and shifts the equilibrium between 70S ribosomes and their 50S and 30S subunits in favor of the free subunits, thus enhancing the availability of 30S subunits on which protein synthesis initiation begins.</text>
</comment>
<comment type="subunit">
    <text evidence="1">Monomer.</text>
</comment>
<comment type="subcellular location">
    <subcellularLocation>
        <location evidence="1">Cytoplasm</location>
    </subcellularLocation>
</comment>
<comment type="similarity">
    <text evidence="1">Belongs to the IF-3 family.</text>
</comment>
<proteinExistence type="inferred from homology"/>
<keyword id="KW-0963">Cytoplasm</keyword>
<keyword id="KW-0396">Initiation factor</keyword>
<keyword id="KW-0648">Protein biosynthesis</keyword>
<keyword id="KW-1185">Reference proteome</keyword>
<name>IF3_GEOSL</name>
<feature type="chain" id="PRO_0000250215" description="Translation initiation factor IF-3">
    <location>
        <begin position="1"/>
        <end position="172"/>
    </location>
</feature>
<sequence length="172" mass="19592">MAKPTVNINQAIRAREVRVVGADSEQLGIMSLQEALALAEARQLDLVEVSPTAVPPVCRIMDYGKFKYQQSKKLQEARKKQSHVQVKEVKLRPKTDEHDLMTKIKHVRRFIEEGNKAKVTLVFRGREITHLEFGSRALDRVAAELEDIAVVEFKPKMEGRSMFMIVAPKVKK</sequence>